<proteinExistence type="inferred from homology"/>
<protein>
    <recommendedName>
        <fullName evidence="1">Isoprenyl transferase</fullName>
        <ecNumber evidence="1">2.5.1.-</ecNumber>
    </recommendedName>
</protein>
<gene>
    <name evidence="1" type="primary">uppS</name>
    <name type="ordered locus">RF_0656</name>
</gene>
<sequence>MQQHLKYKIMTNIKHLAIIMDGNARWADQHNLTKSEGHKAGADKIRELLPEFINLNIPYITLYTFSSENWQRSSTEVDFLIKLLSIYFKNELNSLHKNGVKIKVIGRLNLLSSSLQKQINNAIELTKNNNKITLCIAFSYGSRQEIVDACTKIIASGKKEISESDIGHALYDPEMPDVDLLIRPGGVYRISNFLLWQAAYAELYFSPKYWPAFNKDDIIEAINDYSKRKRTFGKR</sequence>
<comment type="function">
    <text evidence="1">Catalyzes the condensation of isopentenyl diphosphate (IPP) with allylic pyrophosphates generating different type of terpenoids.</text>
</comment>
<comment type="cofactor">
    <cofactor evidence="1">
        <name>Mg(2+)</name>
        <dbReference type="ChEBI" id="CHEBI:18420"/>
    </cofactor>
    <text evidence="1">Binds 2 magnesium ions per subunit.</text>
</comment>
<comment type="subunit">
    <text evidence="1">Homodimer.</text>
</comment>
<comment type="similarity">
    <text evidence="1">Belongs to the UPP synthase family.</text>
</comment>
<name>ISPT_RICFE</name>
<feature type="chain" id="PRO_0000123662" description="Isoprenyl transferase">
    <location>
        <begin position="1"/>
        <end position="235"/>
    </location>
</feature>
<feature type="active site" evidence="1">
    <location>
        <position position="21"/>
    </location>
</feature>
<feature type="active site" description="Proton acceptor" evidence="1">
    <location>
        <position position="69"/>
    </location>
</feature>
<feature type="binding site" evidence="1">
    <location>
        <position position="21"/>
    </location>
    <ligand>
        <name>Mg(2+)</name>
        <dbReference type="ChEBI" id="CHEBI:18420"/>
    </ligand>
</feature>
<feature type="binding site" evidence="1">
    <location>
        <begin position="22"/>
        <end position="25"/>
    </location>
    <ligand>
        <name>substrate</name>
    </ligand>
</feature>
<feature type="binding site" evidence="1">
    <location>
        <position position="26"/>
    </location>
    <ligand>
        <name>substrate</name>
    </ligand>
</feature>
<feature type="binding site" evidence="1">
    <location>
        <position position="34"/>
    </location>
    <ligand>
        <name>substrate</name>
    </ligand>
</feature>
<feature type="binding site" evidence="1">
    <location>
        <position position="38"/>
    </location>
    <ligand>
        <name>substrate</name>
    </ligand>
</feature>
<feature type="binding site" evidence="1">
    <location>
        <begin position="66"/>
        <end position="68"/>
    </location>
    <ligand>
        <name>substrate</name>
    </ligand>
</feature>
<feature type="binding site" evidence="1">
    <location>
        <position position="70"/>
    </location>
    <ligand>
        <name>substrate</name>
    </ligand>
</feature>
<feature type="binding site" evidence="1">
    <location>
        <position position="72"/>
    </location>
    <ligand>
        <name>substrate</name>
    </ligand>
</feature>
<feature type="binding site" evidence="1">
    <location>
        <position position="183"/>
    </location>
    <ligand>
        <name>substrate</name>
    </ligand>
</feature>
<feature type="binding site" evidence="1">
    <location>
        <begin position="189"/>
        <end position="191"/>
    </location>
    <ligand>
        <name>substrate</name>
    </ligand>
</feature>
<feature type="binding site" evidence="1">
    <location>
        <position position="202"/>
    </location>
    <ligand>
        <name>Mg(2+)</name>
        <dbReference type="ChEBI" id="CHEBI:18420"/>
    </ligand>
</feature>
<reference key="1">
    <citation type="journal article" date="2005" name="PLoS Biol.">
        <title>The genome sequence of Rickettsia felis identifies the first putative conjugative plasmid in an obligate intracellular parasite.</title>
        <authorList>
            <person name="Ogata H."/>
            <person name="Renesto P."/>
            <person name="Audic S."/>
            <person name="Robert C."/>
            <person name="Blanc G."/>
            <person name="Fournier P.-E."/>
            <person name="Parinello H."/>
            <person name="Claverie J.-M."/>
            <person name="Raoult D."/>
        </authorList>
    </citation>
    <scope>NUCLEOTIDE SEQUENCE [LARGE SCALE GENOMIC DNA]</scope>
    <source>
        <strain>ATCC VR-1525 / URRWXCal2</strain>
    </source>
</reference>
<accession>Q4ULR6</accession>
<organism>
    <name type="scientific">Rickettsia felis (strain ATCC VR-1525 / URRWXCal2)</name>
    <name type="common">Rickettsia azadi</name>
    <dbReference type="NCBI Taxonomy" id="315456"/>
    <lineage>
        <taxon>Bacteria</taxon>
        <taxon>Pseudomonadati</taxon>
        <taxon>Pseudomonadota</taxon>
        <taxon>Alphaproteobacteria</taxon>
        <taxon>Rickettsiales</taxon>
        <taxon>Rickettsiaceae</taxon>
        <taxon>Rickettsieae</taxon>
        <taxon>Rickettsia</taxon>
        <taxon>spotted fever group</taxon>
    </lineage>
</organism>
<dbReference type="EC" id="2.5.1.-" evidence="1"/>
<dbReference type="EMBL" id="CP000053">
    <property type="protein sequence ID" value="AAY61507.1"/>
    <property type="molecule type" value="Genomic_DNA"/>
</dbReference>
<dbReference type="SMR" id="Q4ULR6"/>
<dbReference type="STRING" id="315456.RF_0656"/>
<dbReference type="KEGG" id="rfe:RF_0656"/>
<dbReference type="eggNOG" id="COG0020">
    <property type="taxonomic scope" value="Bacteria"/>
</dbReference>
<dbReference type="HOGENOM" id="CLU_038505_1_1_5"/>
<dbReference type="Proteomes" id="UP000008548">
    <property type="component" value="Chromosome"/>
</dbReference>
<dbReference type="GO" id="GO:0045547">
    <property type="term" value="F:ditrans,polycis-polyprenyl diphosphate synthase [(2E,6E)-farnesyl diphosphate specific] activity"/>
    <property type="evidence" value="ECO:0007669"/>
    <property type="project" value="TreeGrafter"/>
</dbReference>
<dbReference type="GO" id="GO:0000287">
    <property type="term" value="F:magnesium ion binding"/>
    <property type="evidence" value="ECO:0007669"/>
    <property type="project" value="UniProtKB-UniRule"/>
</dbReference>
<dbReference type="GO" id="GO:0016094">
    <property type="term" value="P:polyprenol biosynthetic process"/>
    <property type="evidence" value="ECO:0007669"/>
    <property type="project" value="TreeGrafter"/>
</dbReference>
<dbReference type="CDD" id="cd00475">
    <property type="entry name" value="Cis_IPPS"/>
    <property type="match status" value="1"/>
</dbReference>
<dbReference type="Gene3D" id="3.40.1180.10">
    <property type="entry name" value="Decaprenyl diphosphate synthase-like"/>
    <property type="match status" value="1"/>
</dbReference>
<dbReference type="HAMAP" id="MF_01139">
    <property type="entry name" value="ISPT"/>
    <property type="match status" value="1"/>
</dbReference>
<dbReference type="InterPro" id="IPR001441">
    <property type="entry name" value="UPP_synth-like"/>
</dbReference>
<dbReference type="InterPro" id="IPR018520">
    <property type="entry name" value="UPP_synth-like_CS"/>
</dbReference>
<dbReference type="InterPro" id="IPR036424">
    <property type="entry name" value="UPP_synth-like_sf"/>
</dbReference>
<dbReference type="NCBIfam" id="TIGR00055">
    <property type="entry name" value="uppS"/>
    <property type="match status" value="1"/>
</dbReference>
<dbReference type="PANTHER" id="PTHR10291:SF0">
    <property type="entry name" value="DEHYDRODOLICHYL DIPHOSPHATE SYNTHASE 2"/>
    <property type="match status" value="1"/>
</dbReference>
<dbReference type="PANTHER" id="PTHR10291">
    <property type="entry name" value="DEHYDRODOLICHYL DIPHOSPHATE SYNTHASE FAMILY MEMBER"/>
    <property type="match status" value="1"/>
</dbReference>
<dbReference type="Pfam" id="PF01255">
    <property type="entry name" value="Prenyltransf"/>
    <property type="match status" value="1"/>
</dbReference>
<dbReference type="SUPFAM" id="SSF64005">
    <property type="entry name" value="Undecaprenyl diphosphate synthase"/>
    <property type="match status" value="1"/>
</dbReference>
<dbReference type="PROSITE" id="PS01066">
    <property type="entry name" value="UPP_SYNTHASE"/>
    <property type="match status" value="1"/>
</dbReference>
<evidence type="ECO:0000255" key="1">
    <source>
        <dbReference type="HAMAP-Rule" id="MF_01139"/>
    </source>
</evidence>
<keyword id="KW-0460">Magnesium</keyword>
<keyword id="KW-0479">Metal-binding</keyword>
<keyword id="KW-0808">Transferase</keyword>